<evidence type="ECO:0000255" key="1">
    <source>
        <dbReference type="HAMAP-Rule" id="MF_00008"/>
    </source>
</evidence>
<accession>Q5D189</accession>
<proteinExistence type="inferred from homology"/>
<organism>
    <name type="scientific">Bacillus subtilis subsp. natto</name>
    <dbReference type="NCBI Taxonomy" id="86029"/>
    <lineage>
        <taxon>Bacteria</taxon>
        <taxon>Bacillati</taxon>
        <taxon>Bacillota</taxon>
        <taxon>Bacilli</taxon>
        <taxon>Bacillales</taxon>
        <taxon>Bacillaceae</taxon>
        <taxon>Bacillus</taxon>
    </lineage>
</organism>
<comment type="function">
    <text evidence="1">Catalyzes the reductive methylation of 2'-deoxyuridine-5'-monophosphate (dUMP) to 2'-deoxythymidine-5'-monophosphate (dTMP) while utilizing 5,10-methylenetetrahydrofolate (mTHF) as the methyl donor and reductant in the reaction, yielding dihydrofolate (DHF) as a by-product. This enzymatic reaction provides an intracellular de novo source of dTMP, an essential precursor for DNA biosynthesis.</text>
</comment>
<comment type="catalytic activity">
    <reaction evidence="1">
        <text>dUMP + (6R)-5,10-methylene-5,6,7,8-tetrahydrofolate = 7,8-dihydrofolate + dTMP</text>
        <dbReference type="Rhea" id="RHEA:12104"/>
        <dbReference type="ChEBI" id="CHEBI:15636"/>
        <dbReference type="ChEBI" id="CHEBI:57451"/>
        <dbReference type="ChEBI" id="CHEBI:63528"/>
        <dbReference type="ChEBI" id="CHEBI:246422"/>
        <dbReference type="EC" id="2.1.1.45"/>
    </reaction>
</comment>
<comment type="pathway">
    <text evidence="1">Pyrimidine metabolism; dTTP biosynthesis.</text>
</comment>
<comment type="subunit">
    <text evidence="1">Homodimer.</text>
</comment>
<comment type="subcellular location">
    <subcellularLocation>
        <location evidence="1">Cytoplasm</location>
    </subcellularLocation>
</comment>
<comment type="similarity">
    <text evidence="1">Belongs to the thymidylate synthase family. Bacterial-type ThyA subfamily.</text>
</comment>
<name>TYSY_BACNA</name>
<sequence length="279" mass="32823">MTQFDKQYNSIIKDIINNGISDEEFDVRTKWDSDGTPAHTLSVMSKQMRFDNSEVPILTTKKVAWKTAIKELLWIWQLKSNDVNDLNKMGVHIWDQWKQEDGTIGHAYGFQLGKKNRSLNGEKVDQVDYLLHQLKNNPSSRRHITMLWNPDDLDAMSLTPCVYETQWYVKHGKLHLEVRARSNDMALGNPFNVFQYNVLQRMIAQVTGYELGEYIFNIGDCHVYTRHIDNLKIQMEREQFEAPELWINPEVKDFYNFTIDDFKLINYKHGDKLLFEVAV</sequence>
<protein>
    <recommendedName>
        <fullName evidence="1">Thymidylate synthase</fullName>
        <shortName evidence="1">TS</shortName>
        <shortName evidence="1">TSase</shortName>
        <ecNumber evidence="1">2.1.1.45</ecNumber>
    </recommendedName>
</protein>
<gene>
    <name evidence="1" type="primary">thyA</name>
</gene>
<feature type="chain" id="PRO_0000140929" description="Thymidylate synthase">
    <location>
        <begin position="1"/>
        <end position="279"/>
    </location>
</feature>
<feature type="active site" description="Nucleophile" evidence="1">
    <location>
        <position position="161"/>
    </location>
</feature>
<feature type="binding site" evidence="1">
    <location>
        <begin position="141"/>
        <end position="142"/>
    </location>
    <ligand>
        <name>dUMP</name>
        <dbReference type="ChEBI" id="CHEBI:246422"/>
        <note>ligand shared between dimeric partners</note>
    </ligand>
</feature>
<feature type="binding site" description="in other chain" evidence="1">
    <location>
        <begin position="181"/>
        <end position="184"/>
    </location>
    <ligand>
        <name>dUMP</name>
        <dbReference type="ChEBI" id="CHEBI:246422"/>
        <note>ligand shared between dimeric partners</note>
    </ligand>
</feature>
<feature type="binding site" evidence="1">
    <location>
        <position position="184"/>
    </location>
    <ligand>
        <name>(6R)-5,10-methylene-5,6,7,8-tetrahydrofolate</name>
        <dbReference type="ChEBI" id="CHEBI:15636"/>
    </ligand>
</feature>
<feature type="binding site" description="in other chain" evidence="1">
    <location>
        <position position="192"/>
    </location>
    <ligand>
        <name>dUMP</name>
        <dbReference type="ChEBI" id="CHEBI:246422"/>
        <note>ligand shared between dimeric partners</note>
    </ligand>
</feature>
<feature type="binding site" description="in other chain" evidence="1">
    <location>
        <begin position="222"/>
        <end position="224"/>
    </location>
    <ligand>
        <name>dUMP</name>
        <dbReference type="ChEBI" id="CHEBI:246422"/>
        <note>ligand shared between dimeric partners</note>
    </ligand>
</feature>
<feature type="binding site" evidence="1">
    <location>
        <position position="278"/>
    </location>
    <ligand>
        <name>(6R)-5,10-methylene-5,6,7,8-tetrahydrofolate</name>
        <dbReference type="ChEBI" id="CHEBI:15636"/>
    </ligand>
</feature>
<dbReference type="EC" id="2.1.1.45" evidence="1"/>
<dbReference type="EMBL" id="AY920747">
    <property type="protein sequence ID" value="AAX18246.1"/>
    <property type="molecule type" value="Genomic_DNA"/>
</dbReference>
<dbReference type="RefSeq" id="WP_014479918.1">
    <property type="nucleotide sequence ID" value="NZ_SJSU01000061.1"/>
</dbReference>
<dbReference type="SMR" id="Q5D189"/>
<dbReference type="UniPathway" id="UPA00575"/>
<dbReference type="GO" id="GO:0005829">
    <property type="term" value="C:cytosol"/>
    <property type="evidence" value="ECO:0007669"/>
    <property type="project" value="TreeGrafter"/>
</dbReference>
<dbReference type="GO" id="GO:0004799">
    <property type="term" value="F:thymidylate synthase activity"/>
    <property type="evidence" value="ECO:0007669"/>
    <property type="project" value="UniProtKB-UniRule"/>
</dbReference>
<dbReference type="GO" id="GO:0006231">
    <property type="term" value="P:dTMP biosynthetic process"/>
    <property type="evidence" value="ECO:0007669"/>
    <property type="project" value="UniProtKB-UniRule"/>
</dbReference>
<dbReference type="GO" id="GO:0006235">
    <property type="term" value="P:dTTP biosynthetic process"/>
    <property type="evidence" value="ECO:0007669"/>
    <property type="project" value="UniProtKB-UniRule"/>
</dbReference>
<dbReference type="GO" id="GO:0032259">
    <property type="term" value="P:methylation"/>
    <property type="evidence" value="ECO:0007669"/>
    <property type="project" value="UniProtKB-KW"/>
</dbReference>
<dbReference type="CDD" id="cd00351">
    <property type="entry name" value="TS_Pyrimidine_HMase"/>
    <property type="match status" value="1"/>
</dbReference>
<dbReference type="FunFam" id="3.30.572.10:FF:000010">
    <property type="entry name" value="Thymidylate synthase 1"/>
    <property type="match status" value="1"/>
</dbReference>
<dbReference type="Gene3D" id="3.30.572.10">
    <property type="entry name" value="Thymidylate synthase/dCMP hydroxymethylase domain"/>
    <property type="match status" value="1"/>
</dbReference>
<dbReference type="HAMAP" id="MF_00008">
    <property type="entry name" value="Thymidy_synth_bact"/>
    <property type="match status" value="1"/>
</dbReference>
<dbReference type="InterPro" id="IPR045097">
    <property type="entry name" value="Thymidate_synth/dCMP_Mease"/>
</dbReference>
<dbReference type="InterPro" id="IPR023451">
    <property type="entry name" value="Thymidate_synth/dCMP_Mease_dom"/>
</dbReference>
<dbReference type="InterPro" id="IPR036926">
    <property type="entry name" value="Thymidate_synth/dCMP_Mease_sf"/>
</dbReference>
<dbReference type="InterPro" id="IPR000398">
    <property type="entry name" value="Thymidylate_synthase"/>
</dbReference>
<dbReference type="InterPro" id="IPR020940">
    <property type="entry name" value="Thymidylate_synthase_AS"/>
</dbReference>
<dbReference type="NCBIfam" id="NF002495">
    <property type="entry name" value="PRK01827.1-1"/>
    <property type="match status" value="1"/>
</dbReference>
<dbReference type="NCBIfam" id="TIGR03284">
    <property type="entry name" value="thym_sym"/>
    <property type="match status" value="1"/>
</dbReference>
<dbReference type="PANTHER" id="PTHR11548">
    <property type="entry name" value="THYMIDYLATE SYNTHASE 1"/>
    <property type="match status" value="1"/>
</dbReference>
<dbReference type="PANTHER" id="PTHR11548:SF1">
    <property type="entry name" value="THYMIDYLATE SYNTHASE 1"/>
    <property type="match status" value="1"/>
</dbReference>
<dbReference type="Pfam" id="PF00303">
    <property type="entry name" value="Thymidylat_synt"/>
    <property type="match status" value="1"/>
</dbReference>
<dbReference type="PRINTS" id="PR00108">
    <property type="entry name" value="THYMDSNTHASE"/>
</dbReference>
<dbReference type="SUPFAM" id="SSF55831">
    <property type="entry name" value="Thymidylate synthase/dCMP hydroxymethylase"/>
    <property type="match status" value="1"/>
</dbReference>
<dbReference type="PROSITE" id="PS00091">
    <property type="entry name" value="THYMIDYLATE_SYNTHASE"/>
    <property type="match status" value="1"/>
</dbReference>
<keyword id="KW-0963">Cytoplasm</keyword>
<keyword id="KW-0489">Methyltransferase</keyword>
<keyword id="KW-0545">Nucleotide biosynthesis</keyword>
<keyword id="KW-0808">Transferase</keyword>
<reference key="1">
    <citation type="submission" date="2005-02" db="EMBL/GenBank/DDBJ databases">
        <authorList>
            <person name="Qin Z.H."/>
            <person name="Cai J.P."/>
            <person name="Ye X.H."/>
            <person name="Wang X."/>
            <person name="Wang P.Y."/>
            <person name="Chen W."/>
            <person name="Xie M.Q."/>
        </authorList>
    </citation>
    <scope>NUCLEOTIDE SEQUENCE [GENOMIC DNA]</scope>
    <source>
        <strain>KX</strain>
    </source>
</reference>